<feature type="chain" id="PRO_0000385111" description="Uncharacterized protein ORF91">
    <location>
        <begin position="1"/>
        <end position="360"/>
    </location>
</feature>
<protein>
    <recommendedName>
        <fullName>Uncharacterized protein ORF91</fullName>
    </recommendedName>
</protein>
<gene>
    <name type="ORF">ORF91</name>
</gene>
<name>Y091_OSHVF</name>
<organism>
    <name type="scientific">Ostreid herpesvirus 1 (isolate France)</name>
    <name type="common">OsHV-1</name>
    <name type="synonym">Pacific oyster herpesvirus</name>
    <dbReference type="NCBI Taxonomy" id="654903"/>
    <lineage>
        <taxon>Viruses</taxon>
        <taxon>Duplodnaviria</taxon>
        <taxon>Heunggongvirae</taxon>
        <taxon>Peploviricota</taxon>
        <taxon>Herviviricetes</taxon>
        <taxon>Herpesvirales</taxon>
        <taxon>Malacoherpesviridae</taxon>
        <taxon>Ostreavirus</taxon>
        <taxon>Ostreavirus ostreidmalaco1</taxon>
        <taxon>Ostreid herpesvirus 1</taxon>
    </lineage>
</organism>
<proteinExistence type="predicted"/>
<sequence>MDFICAAPGFKSISAINLFMGLWSGRRKELKLISSSRLSELFDTPKKYAGFYTMLKSYRTDLKSDYRNFLVRVAGKYNDVLSIAIRMEYRMYQIALLRMIRVFEHILANWRTLSSNDVPTAECDEYFAKELLIPGKEIYHSDVGIEVVADIPHLIFMYSSVKGQLKRMIPTTDRPVCDHLMFRETEEELDPLAEEVVVENMPVILDDKELNRIVEYIAHLASYPVIPPDLAGNVLTTHGFDEYEALELKDMSKDNRSRVVGLADDRVCVACKVDSLAIGHTDIIEQDRRMVCNCAVKINRDVYSDEGDDLITTLATTKASMKVRNLVMNGKGGCQCKSHGSVMNAAVNRFTEVLRSLHVF</sequence>
<reference key="1">
    <citation type="journal article" date="2005" name="J. Gen. Virol.">
        <title>A novel class of herpesvirus with bivalve hosts.</title>
        <authorList>
            <person name="Davison A.J."/>
            <person name="Trus B.L."/>
            <person name="Cheng N."/>
            <person name="Steven A.C."/>
            <person name="Watson M.S."/>
            <person name="Cunningham C."/>
            <person name="Le Deuff R.M."/>
            <person name="Renault T."/>
        </authorList>
    </citation>
    <scope>NUCLEOTIDE SEQUENCE [LARGE SCALE GENOMIC DNA]</scope>
</reference>
<accession>Q6R7D8</accession>
<organismHost>
    <name type="scientific">Magallana gigas</name>
    <name type="common">Pacific oyster</name>
    <name type="synonym">Crassostrea gigas</name>
    <dbReference type="NCBI Taxonomy" id="29159"/>
</organismHost>
<organismHost>
    <name type="scientific">Pecten maximus</name>
    <name type="common">King scallop</name>
    <name type="synonym">Pilgrim's clam</name>
    <dbReference type="NCBI Taxonomy" id="6579"/>
</organismHost>
<dbReference type="EMBL" id="AY509253">
    <property type="protein sequence ID" value="AAS00977.1"/>
    <property type="molecule type" value="Genomic_DNA"/>
</dbReference>
<dbReference type="RefSeq" id="YP_024630.1">
    <property type="nucleotide sequence ID" value="NC_005881.2"/>
</dbReference>
<dbReference type="KEGG" id="vg:2948240"/>
<dbReference type="Proteomes" id="UP000007021">
    <property type="component" value="Segment"/>
</dbReference>
<keyword id="KW-1185">Reference proteome</keyword>